<proteinExistence type="inferred from homology"/>
<evidence type="ECO:0000255" key="1">
    <source>
        <dbReference type="HAMAP-Rule" id="MF_01318"/>
    </source>
</evidence>
<evidence type="ECO:0000305" key="2"/>
<accession>C1CQB6</accession>
<sequence>MAKKSKQLCAALEKIDSTKAYSVEEAVALAKETNFAKFDATVEVAYNLNIDVKKADQQIRGAMVLPNGTGKTSRVLVFARGAKAEEAKAAGADFVGEDDLVAKINDGWLDFDVVIATPDMMALVGRLGRVLGPRNLMPNPKTGTVTMDVAKAVEESKGGKITYRADRAGNVQAIIGKVSFEAEKLVENFKAFNETIQKAKPATAKGTYVTNLTITTTQGVGIKVDVNSL</sequence>
<name>RL1_STRZT</name>
<gene>
    <name evidence="1" type="primary">rplA</name>
    <name type="ordered locus">SPT_0657</name>
</gene>
<reference key="1">
    <citation type="journal article" date="2010" name="Genome Biol.">
        <title>Structure and dynamics of the pan-genome of Streptococcus pneumoniae and closely related species.</title>
        <authorList>
            <person name="Donati C."/>
            <person name="Hiller N.L."/>
            <person name="Tettelin H."/>
            <person name="Muzzi A."/>
            <person name="Croucher N.J."/>
            <person name="Angiuoli S.V."/>
            <person name="Oggioni M."/>
            <person name="Dunning Hotopp J.C."/>
            <person name="Hu F.Z."/>
            <person name="Riley D.R."/>
            <person name="Covacci A."/>
            <person name="Mitchell T.J."/>
            <person name="Bentley S.D."/>
            <person name="Kilian M."/>
            <person name="Ehrlich G.D."/>
            <person name="Rappuoli R."/>
            <person name="Moxon E.R."/>
            <person name="Masignani V."/>
        </authorList>
    </citation>
    <scope>NUCLEOTIDE SEQUENCE [LARGE SCALE GENOMIC DNA]</scope>
    <source>
        <strain>Taiwan19F-14</strain>
    </source>
</reference>
<dbReference type="EMBL" id="CP000921">
    <property type="protein sequence ID" value="ACO23015.1"/>
    <property type="molecule type" value="Genomic_DNA"/>
</dbReference>
<dbReference type="RefSeq" id="WP_001085670.1">
    <property type="nucleotide sequence ID" value="NC_012469.1"/>
</dbReference>
<dbReference type="SMR" id="C1CQB6"/>
<dbReference type="KEGG" id="snt:SPT_0657"/>
<dbReference type="HOGENOM" id="CLU_062853_0_0_9"/>
<dbReference type="GO" id="GO:0015934">
    <property type="term" value="C:large ribosomal subunit"/>
    <property type="evidence" value="ECO:0007669"/>
    <property type="project" value="InterPro"/>
</dbReference>
<dbReference type="GO" id="GO:0019843">
    <property type="term" value="F:rRNA binding"/>
    <property type="evidence" value="ECO:0007669"/>
    <property type="project" value="UniProtKB-UniRule"/>
</dbReference>
<dbReference type="GO" id="GO:0003735">
    <property type="term" value="F:structural constituent of ribosome"/>
    <property type="evidence" value="ECO:0007669"/>
    <property type="project" value="InterPro"/>
</dbReference>
<dbReference type="GO" id="GO:0000049">
    <property type="term" value="F:tRNA binding"/>
    <property type="evidence" value="ECO:0007669"/>
    <property type="project" value="UniProtKB-KW"/>
</dbReference>
<dbReference type="GO" id="GO:0006417">
    <property type="term" value="P:regulation of translation"/>
    <property type="evidence" value="ECO:0007669"/>
    <property type="project" value="UniProtKB-KW"/>
</dbReference>
<dbReference type="GO" id="GO:0006412">
    <property type="term" value="P:translation"/>
    <property type="evidence" value="ECO:0007669"/>
    <property type="project" value="UniProtKB-UniRule"/>
</dbReference>
<dbReference type="CDD" id="cd00403">
    <property type="entry name" value="Ribosomal_L1"/>
    <property type="match status" value="1"/>
</dbReference>
<dbReference type="FunFam" id="3.40.50.790:FF:000001">
    <property type="entry name" value="50S ribosomal protein L1"/>
    <property type="match status" value="1"/>
</dbReference>
<dbReference type="Gene3D" id="3.30.190.20">
    <property type="match status" value="1"/>
</dbReference>
<dbReference type="Gene3D" id="3.40.50.790">
    <property type="match status" value="1"/>
</dbReference>
<dbReference type="HAMAP" id="MF_01318_B">
    <property type="entry name" value="Ribosomal_uL1_B"/>
    <property type="match status" value="1"/>
</dbReference>
<dbReference type="InterPro" id="IPR005878">
    <property type="entry name" value="Ribosom_uL1_bac-type"/>
</dbReference>
<dbReference type="InterPro" id="IPR002143">
    <property type="entry name" value="Ribosomal_uL1"/>
</dbReference>
<dbReference type="InterPro" id="IPR023674">
    <property type="entry name" value="Ribosomal_uL1-like"/>
</dbReference>
<dbReference type="InterPro" id="IPR028364">
    <property type="entry name" value="Ribosomal_uL1/biogenesis"/>
</dbReference>
<dbReference type="InterPro" id="IPR016095">
    <property type="entry name" value="Ribosomal_uL1_3-a/b-sand"/>
</dbReference>
<dbReference type="InterPro" id="IPR023673">
    <property type="entry name" value="Ribosomal_uL1_CS"/>
</dbReference>
<dbReference type="NCBIfam" id="TIGR01169">
    <property type="entry name" value="rplA_bact"/>
    <property type="match status" value="1"/>
</dbReference>
<dbReference type="PANTHER" id="PTHR36427">
    <property type="entry name" value="54S RIBOSOMAL PROTEIN L1, MITOCHONDRIAL"/>
    <property type="match status" value="1"/>
</dbReference>
<dbReference type="PANTHER" id="PTHR36427:SF3">
    <property type="entry name" value="LARGE RIBOSOMAL SUBUNIT PROTEIN UL1M"/>
    <property type="match status" value="1"/>
</dbReference>
<dbReference type="Pfam" id="PF00687">
    <property type="entry name" value="Ribosomal_L1"/>
    <property type="match status" value="1"/>
</dbReference>
<dbReference type="PIRSF" id="PIRSF002155">
    <property type="entry name" value="Ribosomal_L1"/>
    <property type="match status" value="1"/>
</dbReference>
<dbReference type="SUPFAM" id="SSF56808">
    <property type="entry name" value="Ribosomal protein L1"/>
    <property type="match status" value="1"/>
</dbReference>
<dbReference type="PROSITE" id="PS01199">
    <property type="entry name" value="RIBOSOMAL_L1"/>
    <property type="match status" value="1"/>
</dbReference>
<protein>
    <recommendedName>
        <fullName evidence="1">Large ribosomal subunit protein uL1</fullName>
    </recommendedName>
    <alternativeName>
        <fullName evidence="2">50S ribosomal protein L1</fullName>
    </alternativeName>
</protein>
<comment type="function">
    <text evidence="1">Binds directly to 23S rRNA. The L1 stalk is quite mobile in the ribosome, and is involved in E site tRNA release.</text>
</comment>
<comment type="function">
    <text evidence="1">Protein L1 is also a translational repressor protein, it controls the translation of the L11 operon by binding to its mRNA.</text>
</comment>
<comment type="subunit">
    <text evidence="1">Part of the 50S ribosomal subunit.</text>
</comment>
<comment type="similarity">
    <text evidence="1">Belongs to the universal ribosomal protein uL1 family.</text>
</comment>
<feature type="chain" id="PRO_1000165706" description="Large ribosomal subunit protein uL1">
    <location>
        <begin position="1"/>
        <end position="229"/>
    </location>
</feature>
<keyword id="KW-0678">Repressor</keyword>
<keyword id="KW-0687">Ribonucleoprotein</keyword>
<keyword id="KW-0689">Ribosomal protein</keyword>
<keyword id="KW-0694">RNA-binding</keyword>
<keyword id="KW-0699">rRNA-binding</keyword>
<keyword id="KW-0810">Translation regulation</keyword>
<keyword id="KW-0820">tRNA-binding</keyword>
<organism>
    <name type="scientific">Streptococcus pneumoniae (strain Taiwan19F-14)</name>
    <dbReference type="NCBI Taxonomy" id="487213"/>
    <lineage>
        <taxon>Bacteria</taxon>
        <taxon>Bacillati</taxon>
        <taxon>Bacillota</taxon>
        <taxon>Bacilli</taxon>
        <taxon>Lactobacillales</taxon>
        <taxon>Streptococcaceae</taxon>
        <taxon>Streptococcus</taxon>
    </lineage>
</organism>